<evidence type="ECO:0000250" key="1"/>
<evidence type="ECO:0000305" key="2"/>
<gene>
    <name type="primary">pgk</name>
</gene>
<keyword id="KW-0067">ATP-binding</keyword>
<keyword id="KW-0963">Cytoplasm</keyword>
<keyword id="KW-0324">Glycolysis</keyword>
<keyword id="KW-0418">Kinase</keyword>
<keyword id="KW-0547">Nucleotide-binding</keyword>
<keyword id="KW-0808">Transferase</keyword>
<reference key="1">
    <citation type="journal article" date="1994" name="J. Bacteriol.">
        <title>The Calvin cycle enzyme phosphoglycerate kinase of Xanthobacter flavus required for autotrophic CO2 fixation is not encoded by the cbb operon.</title>
        <authorList>
            <person name="Meijer W.G."/>
        </authorList>
    </citation>
    <scope>NUCLEOTIDE SEQUENCE [GENOMIC DNA]</scope>
    <source>
        <strain>H4-14</strain>
    </source>
</reference>
<dbReference type="EC" id="2.7.2.3"/>
<dbReference type="EMBL" id="U08462">
    <property type="protein sequence ID" value="AAA62185.1"/>
    <property type="molecule type" value="Genomic_DNA"/>
</dbReference>
<dbReference type="EMBL" id="U33064">
    <property type="protein sequence ID" value="AAA96748.1"/>
    <property type="molecule type" value="Genomic_DNA"/>
</dbReference>
<dbReference type="SMR" id="P50314"/>
<dbReference type="UniPathway" id="UPA00109">
    <property type="reaction ID" value="UER00185"/>
</dbReference>
<dbReference type="GO" id="GO:0005829">
    <property type="term" value="C:cytosol"/>
    <property type="evidence" value="ECO:0007669"/>
    <property type="project" value="TreeGrafter"/>
</dbReference>
<dbReference type="GO" id="GO:0043531">
    <property type="term" value="F:ADP binding"/>
    <property type="evidence" value="ECO:0007669"/>
    <property type="project" value="TreeGrafter"/>
</dbReference>
<dbReference type="GO" id="GO:0005524">
    <property type="term" value="F:ATP binding"/>
    <property type="evidence" value="ECO:0007669"/>
    <property type="project" value="UniProtKB-KW"/>
</dbReference>
<dbReference type="GO" id="GO:0004618">
    <property type="term" value="F:phosphoglycerate kinase activity"/>
    <property type="evidence" value="ECO:0007669"/>
    <property type="project" value="UniProtKB-UniRule"/>
</dbReference>
<dbReference type="GO" id="GO:0006094">
    <property type="term" value="P:gluconeogenesis"/>
    <property type="evidence" value="ECO:0007669"/>
    <property type="project" value="TreeGrafter"/>
</dbReference>
<dbReference type="GO" id="GO:0006096">
    <property type="term" value="P:glycolytic process"/>
    <property type="evidence" value="ECO:0007669"/>
    <property type="project" value="UniProtKB-UniRule"/>
</dbReference>
<dbReference type="CDD" id="cd00318">
    <property type="entry name" value="Phosphoglycerate_kinase"/>
    <property type="match status" value="1"/>
</dbReference>
<dbReference type="FunFam" id="3.40.50.1260:FF:000006">
    <property type="entry name" value="Phosphoglycerate kinase"/>
    <property type="match status" value="1"/>
</dbReference>
<dbReference type="FunFam" id="3.40.50.1260:FF:000031">
    <property type="entry name" value="Phosphoglycerate kinase 1"/>
    <property type="match status" value="1"/>
</dbReference>
<dbReference type="Gene3D" id="3.40.50.1260">
    <property type="entry name" value="Phosphoglycerate kinase, N-terminal domain"/>
    <property type="match status" value="2"/>
</dbReference>
<dbReference type="HAMAP" id="MF_00145">
    <property type="entry name" value="Phosphoglyc_kinase"/>
    <property type="match status" value="1"/>
</dbReference>
<dbReference type="InterPro" id="IPR001576">
    <property type="entry name" value="Phosphoglycerate_kinase"/>
</dbReference>
<dbReference type="InterPro" id="IPR015911">
    <property type="entry name" value="Phosphoglycerate_kinase_CS"/>
</dbReference>
<dbReference type="InterPro" id="IPR015824">
    <property type="entry name" value="Phosphoglycerate_kinase_N"/>
</dbReference>
<dbReference type="InterPro" id="IPR036043">
    <property type="entry name" value="Phosphoglycerate_kinase_sf"/>
</dbReference>
<dbReference type="PANTHER" id="PTHR11406">
    <property type="entry name" value="PHOSPHOGLYCERATE KINASE"/>
    <property type="match status" value="1"/>
</dbReference>
<dbReference type="PANTHER" id="PTHR11406:SF23">
    <property type="entry name" value="PHOSPHOGLYCERATE KINASE 1, CHLOROPLASTIC-RELATED"/>
    <property type="match status" value="1"/>
</dbReference>
<dbReference type="Pfam" id="PF00162">
    <property type="entry name" value="PGK"/>
    <property type="match status" value="1"/>
</dbReference>
<dbReference type="PIRSF" id="PIRSF000724">
    <property type="entry name" value="Pgk"/>
    <property type="match status" value="1"/>
</dbReference>
<dbReference type="PRINTS" id="PR00477">
    <property type="entry name" value="PHGLYCKINASE"/>
</dbReference>
<dbReference type="SUPFAM" id="SSF53748">
    <property type="entry name" value="Phosphoglycerate kinase"/>
    <property type="match status" value="1"/>
</dbReference>
<dbReference type="PROSITE" id="PS00111">
    <property type="entry name" value="PGLYCERATE_KINASE"/>
    <property type="match status" value="1"/>
</dbReference>
<name>PGK_XANFL</name>
<sequence>MIAFRTLDDAVDLADKRVLVRVDLNVPMESGRVTDATRLKAILPTIRDITGKGGKAVLLAHLGRPKGRDESQSLAPVAKALEGELGRKVAFASDCIGDEAKSAVSRLASGEVIVLENTRFHAGEEKNAPDFIEALASLGDIYVNDAFSTAHRAHASTEGLARKLPAYAGRSMESEIEALTKALEAPQRPVLAVVGGSKVSSKLELLGNLVKKVDILVIGGGMANTFLAALGKKVGKSLCEHDLANTARDILKKAEAAGCEIVLPVDAVVATEFKANAAHRVTSVDDVKDDEMMLDAGPETVGIVKQKLDGAKTVVWNGPFGAFEMTPFDAATVAVARYVGDLTHKGRLLSVAGGGDTVAALNHAGTAERFSYVSTAGGAFLEWLEGKALPGVEALRR</sequence>
<protein>
    <recommendedName>
        <fullName>Phosphoglycerate kinase</fullName>
        <ecNumber>2.7.2.3</ecNumber>
    </recommendedName>
</protein>
<comment type="catalytic activity">
    <reaction>
        <text>(2R)-3-phosphoglycerate + ATP = (2R)-3-phospho-glyceroyl phosphate + ADP</text>
        <dbReference type="Rhea" id="RHEA:14801"/>
        <dbReference type="ChEBI" id="CHEBI:30616"/>
        <dbReference type="ChEBI" id="CHEBI:57604"/>
        <dbReference type="ChEBI" id="CHEBI:58272"/>
        <dbReference type="ChEBI" id="CHEBI:456216"/>
        <dbReference type="EC" id="2.7.2.3"/>
    </reaction>
</comment>
<comment type="pathway">
    <text>Carbohydrate degradation; glycolysis; pyruvate from D-glyceraldehyde 3-phosphate: step 2/5.</text>
</comment>
<comment type="subunit">
    <text evidence="1">Monomer.</text>
</comment>
<comment type="subcellular location">
    <subcellularLocation>
        <location>Cytoplasm</location>
    </subcellularLocation>
</comment>
<comment type="similarity">
    <text evidence="2">Belongs to the phosphoglycerate kinase family.</text>
</comment>
<organism>
    <name type="scientific">Xanthobacter flavus</name>
    <dbReference type="NCBI Taxonomy" id="281"/>
    <lineage>
        <taxon>Bacteria</taxon>
        <taxon>Pseudomonadati</taxon>
        <taxon>Pseudomonadota</taxon>
        <taxon>Alphaproteobacteria</taxon>
        <taxon>Hyphomicrobiales</taxon>
        <taxon>Xanthobacteraceae</taxon>
        <taxon>Xanthobacter</taxon>
    </lineage>
</organism>
<feature type="chain" id="PRO_0000146046" description="Phosphoglycerate kinase">
    <location>
        <begin position="1"/>
        <end position="397"/>
    </location>
</feature>
<feature type="binding site" evidence="1">
    <location>
        <begin position="23"/>
        <end position="25"/>
    </location>
    <ligand>
        <name>substrate</name>
    </ligand>
</feature>
<feature type="binding site" evidence="1">
    <location>
        <position position="38"/>
    </location>
    <ligand>
        <name>substrate</name>
    </ligand>
</feature>
<feature type="binding site" evidence="1">
    <location>
        <begin position="61"/>
        <end position="64"/>
    </location>
    <ligand>
        <name>substrate</name>
    </ligand>
</feature>
<feature type="binding site" evidence="1">
    <location>
        <position position="119"/>
    </location>
    <ligand>
        <name>substrate</name>
    </ligand>
</feature>
<feature type="binding site" evidence="1">
    <location>
        <position position="152"/>
    </location>
    <ligand>
        <name>substrate</name>
    </ligand>
</feature>
<feature type="binding site" evidence="1">
    <location>
        <position position="202"/>
    </location>
    <ligand>
        <name>ATP</name>
        <dbReference type="ChEBI" id="CHEBI:30616"/>
    </ligand>
</feature>
<feature type="binding site" evidence="1">
    <location>
        <position position="324"/>
    </location>
    <ligand>
        <name>ATP</name>
        <dbReference type="ChEBI" id="CHEBI:30616"/>
    </ligand>
</feature>
<feature type="binding site" evidence="1">
    <location>
        <begin position="354"/>
        <end position="357"/>
    </location>
    <ligand>
        <name>ATP</name>
        <dbReference type="ChEBI" id="CHEBI:30616"/>
    </ligand>
</feature>
<proteinExistence type="inferred from homology"/>
<accession>P50314</accession>